<sequence length="1048" mass="118558">MEPVSAECQLPPEDDLLEMMMEQSFTEPEEKSKDKSTRKIIPKTKLCRGLNNRYCVLNVKEVYAQGEEKHLTITASQEGDDLELCILKDDWVALHIKPGDIIHLEGNCAFDNTWTISRDTGYLILYPDLLISGTSIANGIRCLRRSVLSEKFKVCDKGSRQMLIGTMLHDIFQRATTRGFTDSVLQELAHHTVHGPKYLKEMYQLKLNQTDVMGEVQEYLPSFAKWAIDFMTHPLNQHQINVTRPTAGDPTEATKVSEFLDIEENIWSPRFGLKGKIDVTARVKIHQKSKSHLKIMPLELKTGKESNSIEHRSQVVLYTLLSQERREDPEAGLLLYLKTGNMYSVPGNRLDRRELLKIRNELSYYLTNVVHKSDNGSKEITLASLPALIADRQACKFCSQMRNCALYSRSVEQQIENCYIPAEMIPVVQKETEHLNKDHLQYFRLWYLMCTLEGNSKDSKMGRKNIWMMSSSEREEDGQCIGNLIRTGPVQTISDGQHLHSFQRKSGTVPATNLMSGDRVVVSGEDKFLALSSGYIKEVKHNNITCILDRSLGKLPEDLLFRLDHEEGGGGLESHLGNLSRLMENSPVSDKLRKLIIDFSKPNFVQHLSSVLPSDAKDIVANILKGLNKPQKQAMKRVLLSKDYTLIVGMPGTGKTTTICTLVSTLHLKTCTSCLVDDHREAAGTHRSHRHSKGTVNLGKQKRQHRVTSTTSSTSAKCRSKTEPAVSAENKKLQKLISGSHVCIMVNGHKTFSQNNYIIFFDNILLLKKLPLHYMCAFALIHHQCFKGCVKSVSLVRELGMSESLFKRLERNQEAVVQLTVQYRMNSQIMALSNKLVYEGRLECASDRVSNAVVKLPHIKTLLLELEFRESQESMWIKDVLEPSNPVCFLNTEKIPALETEEKGGISNWIEAKLVFCLTKLFLKAGCRPSDIGIIAPYRQQLKVISNYFNSLSASAVEVNTVDKYQGRDKSVIIVSFVRSNIDGKLGDLLKDWRRLNVALTRAKHKLIMLGCVPTLSRFLCLEQLICHLKSKNHIYDLPAGAHEHMPV</sequence>
<comment type="function">
    <text evidence="2">Key enzyme involved in DNA replication and DNA repair in nucleus and mitochondrion. Involved in Okazaki fragments processing by cleaving long flaps that escape fen1: flaps that are longer than 27 nucleotides are coated by replication protein A complex (RPA), leading to recruit dna2 which cleaves the flap until it is too short to bind RPA and becomes a substrate for FEN1. Also involved in 5'-end resection of DNA during double-strand break (DSB) repair by mediating the cleavage of 5'-ssDNA, while the 3'-ssDNA cleavage is prevented by the presence of RPA. Also involved in DNA replication checkpoint independently of Okazaki fragments processing. Possesses different enzymatic activities, such as single-stranded DNA (ssDNA)-dependent ATPase, 5'-3' helicase and endonuclease activities. While the ATPase and endonuclease activities are well-defined and play a key role in Okazaki fragments processing and DSB repair, the 5'-3' DNA helicase activity is subject to debate. According to various reports, the helicase activity is weak and its function remains largely unclear. Helicase activity may promote the motion of dna2 on the flap, helping the nuclease function (By similarity).</text>
</comment>
<comment type="catalytic activity">
    <reaction>
        <text>ATP + H2O = ADP + phosphate + H(+)</text>
        <dbReference type="Rhea" id="RHEA:13065"/>
        <dbReference type="ChEBI" id="CHEBI:15377"/>
        <dbReference type="ChEBI" id="CHEBI:15378"/>
        <dbReference type="ChEBI" id="CHEBI:30616"/>
        <dbReference type="ChEBI" id="CHEBI:43474"/>
        <dbReference type="ChEBI" id="CHEBI:456216"/>
        <dbReference type="EC" id="3.6.4.12"/>
    </reaction>
</comment>
<comment type="cofactor">
    <cofactor evidence="1">
        <name>[4Fe-4S] cluster</name>
        <dbReference type="ChEBI" id="CHEBI:49883"/>
    </cofactor>
    <text evidence="1">Binds 1 [4Fe-4S] cluster.</text>
</comment>
<comment type="subcellular location">
    <subcellularLocation>
        <location evidence="2">Nucleus</location>
    </subcellularLocation>
    <subcellularLocation>
        <location evidence="2">Mitochondrion</location>
    </subcellularLocation>
</comment>
<comment type="similarity">
    <text evidence="5">Belongs to the DNA2/NAM7 helicase family.</text>
</comment>
<evidence type="ECO:0000250" key="1"/>
<evidence type="ECO:0000250" key="2">
    <source>
        <dbReference type="UniProtKB" id="P51530"/>
    </source>
</evidence>
<evidence type="ECO:0000255" key="3"/>
<evidence type="ECO:0000256" key="4">
    <source>
        <dbReference type="SAM" id="MobiDB-lite"/>
    </source>
</evidence>
<evidence type="ECO:0000305" key="5"/>
<proteinExistence type="inferred from homology"/>
<accession>F6QXW0</accession>
<feature type="chain" id="PRO_0000419467" description="DNA replication ATP-dependent helicase/nuclease DNA2">
    <location>
        <begin position="1"/>
        <end position="1048"/>
    </location>
</feature>
<feature type="region of interest" description="Nuclease activity" evidence="1">
    <location>
        <begin position="86"/>
        <end position="521"/>
    </location>
</feature>
<feature type="region of interest" description="Helicase activity" evidence="1">
    <location>
        <begin position="522"/>
        <end position="1048"/>
    </location>
</feature>
<feature type="region of interest" description="Disordered" evidence="4">
    <location>
        <begin position="683"/>
        <end position="724"/>
    </location>
</feature>
<feature type="compositionally biased region" description="Polar residues" evidence="4">
    <location>
        <begin position="707"/>
        <end position="717"/>
    </location>
</feature>
<feature type="binding site" evidence="1">
    <location>
        <position position="142"/>
    </location>
    <ligand>
        <name>[4Fe-4S] cluster</name>
        <dbReference type="ChEBI" id="CHEBI:49883"/>
    </ligand>
</feature>
<feature type="binding site" evidence="1">
    <location>
        <position position="395"/>
    </location>
    <ligand>
        <name>[4Fe-4S] cluster</name>
        <dbReference type="ChEBI" id="CHEBI:49883"/>
    </ligand>
</feature>
<feature type="binding site" evidence="1">
    <location>
        <position position="398"/>
    </location>
    <ligand>
        <name>[4Fe-4S] cluster</name>
        <dbReference type="ChEBI" id="CHEBI:49883"/>
    </ligand>
</feature>
<feature type="binding site" evidence="1">
    <location>
        <position position="404"/>
    </location>
    <ligand>
        <name>[4Fe-4S] cluster</name>
        <dbReference type="ChEBI" id="CHEBI:49883"/>
    </ligand>
</feature>
<feature type="binding site" evidence="3">
    <location>
        <begin position="649"/>
        <end position="656"/>
    </location>
    <ligand>
        <name>ATP</name>
        <dbReference type="ChEBI" id="CHEBI:30616"/>
    </ligand>
</feature>
<protein>
    <recommendedName>
        <fullName>DNA replication ATP-dependent helicase/nuclease DNA2</fullName>
    </recommendedName>
    <alternativeName>
        <fullName>DNA replication ATP-dependent helicase-like homolog</fullName>
    </alternativeName>
    <domain>
        <recommendedName>
            <fullName>DNA replication nuclease DNA2</fullName>
            <ecNumber>3.1.-.-</ecNumber>
        </recommendedName>
    </domain>
    <domain>
        <recommendedName>
            <fullName>DNA replication ATP-dependent helicase DNA2</fullName>
            <ecNumber>3.6.4.12</ecNumber>
        </recommendedName>
    </domain>
</protein>
<dbReference type="EC" id="3.1.-.-"/>
<dbReference type="EC" id="3.6.4.12"/>
<dbReference type="EMBL" id="AAMC01051984">
    <property type="status" value="NOT_ANNOTATED_CDS"/>
    <property type="molecule type" value="Genomic_DNA"/>
</dbReference>
<dbReference type="EMBL" id="AAMC01051985">
    <property type="status" value="NOT_ANNOTATED_CDS"/>
    <property type="molecule type" value="Genomic_DNA"/>
</dbReference>
<dbReference type="EMBL" id="AAMC01051986">
    <property type="status" value="NOT_ANNOTATED_CDS"/>
    <property type="molecule type" value="Genomic_DNA"/>
</dbReference>
<dbReference type="SMR" id="F6QXW0"/>
<dbReference type="FunCoup" id="F6QXW0">
    <property type="interactions" value="2693"/>
</dbReference>
<dbReference type="STRING" id="8364.ENSXETP00000016317"/>
<dbReference type="PaxDb" id="8364-ENSXETP00000016310"/>
<dbReference type="eggNOG" id="KOG1805">
    <property type="taxonomic scope" value="Eukaryota"/>
</dbReference>
<dbReference type="HOGENOM" id="CLU_001666_2_0_1"/>
<dbReference type="InParanoid" id="F6QXW0"/>
<dbReference type="TreeFam" id="TF314903"/>
<dbReference type="Proteomes" id="UP000008143">
    <property type="component" value="Unplaced"/>
</dbReference>
<dbReference type="GO" id="GO:0005739">
    <property type="term" value="C:mitochondrion"/>
    <property type="evidence" value="ECO:0007669"/>
    <property type="project" value="UniProtKB-SubCell"/>
</dbReference>
<dbReference type="GO" id="GO:0005634">
    <property type="term" value="C:nucleus"/>
    <property type="evidence" value="ECO:0007669"/>
    <property type="project" value="UniProtKB-SubCell"/>
</dbReference>
<dbReference type="GO" id="GO:0051539">
    <property type="term" value="F:4 iron, 4 sulfur cluster binding"/>
    <property type="evidence" value="ECO:0007669"/>
    <property type="project" value="UniProtKB-KW"/>
</dbReference>
<dbReference type="GO" id="GO:0043139">
    <property type="term" value="F:5'-3' DNA helicase activity"/>
    <property type="evidence" value="ECO:0000250"/>
    <property type="project" value="UniProtKB"/>
</dbReference>
<dbReference type="GO" id="GO:0017108">
    <property type="term" value="F:5'-flap endonuclease activity"/>
    <property type="evidence" value="ECO:0000250"/>
    <property type="project" value="UniProtKB"/>
</dbReference>
<dbReference type="GO" id="GO:0005524">
    <property type="term" value="F:ATP binding"/>
    <property type="evidence" value="ECO:0007669"/>
    <property type="project" value="UniProtKB-KW"/>
</dbReference>
<dbReference type="GO" id="GO:0016887">
    <property type="term" value="F:ATP hydrolysis activity"/>
    <property type="evidence" value="ECO:0000250"/>
    <property type="project" value="UniProtKB"/>
</dbReference>
<dbReference type="GO" id="GO:0003677">
    <property type="term" value="F:DNA binding"/>
    <property type="evidence" value="ECO:0000250"/>
    <property type="project" value="UniProtKB"/>
</dbReference>
<dbReference type="GO" id="GO:0046872">
    <property type="term" value="F:metal ion binding"/>
    <property type="evidence" value="ECO:0007669"/>
    <property type="project" value="UniProtKB-KW"/>
</dbReference>
<dbReference type="GO" id="GO:0004518">
    <property type="term" value="F:nuclease activity"/>
    <property type="evidence" value="ECO:0000250"/>
    <property type="project" value="UniProtKB"/>
</dbReference>
<dbReference type="GO" id="GO:0017116">
    <property type="term" value="F:single-stranded DNA helicase activity"/>
    <property type="evidence" value="ECO:0000250"/>
    <property type="project" value="UniProtKB"/>
</dbReference>
<dbReference type="GO" id="GO:0006284">
    <property type="term" value="P:base-excision repair"/>
    <property type="evidence" value="ECO:0000250"/>
    <property type="project" value="UniProtKB"/>
</dbReference>
<dbReference type="GO" id="GO:0000729">
    <property type="term" value="P:DNA double-strand break processing"/>
    <property type="evidence" value="ECO:0000250"/>
    <property type="project" value="UniProtKB"/>
</dbReference>
<dbReference type="GO" id="GO:0006260">
    <property type="term" value="P:DNA replication"/>
    <property type="evidence" value="ECO:0000250"/>
    <property type="project" value="UniProtKB"/>
</dbReference>
<dbReference type="GO" id="GO:0000076">
    <property type="term" value="P:DNA replication checkpoint signaling"/>
    <property type="evidence" value="ECO:0000250"/>
    <property type="project" value="UniProtKB"/>
</dbReference>
<dbReference type="GO" id="GO:0033567">
    <property type="term" value="P:DNA replication, Okazaki fragment processing"/>
    <property type="evidence" value="ECO:0000250"/>
    <property type="project" value="UniProtKB"/>
</dbReference>
<dbReference type="CDD" id="cd22318">
    <property type="entry name" value="DNA2_N-like"/>
    <property type="match status" value="1"/>
</dbReference>
<dbReference type="CDD" id="cd18808">
    <property type="entry name" value="SF1_C_Upf1"/>
    <property type="match status" value="1"/>
</dbReference>
<dbReference type="FunFam" id="2.40.30.270:FF:000002">
    <property type="entry name" value="DNA replication ATP-dependent helicase/nuclease DNA2"/>
    <property type="match status" value="1"/>
</dbReference>
<dbReference type="FunFam" id="3.40.50.300:FF:000789">
    <property type="entry name" value="DNA replication ATP-dependent helicase/nuclease DNA2"/>
    <property type="match status" value="1"/>
</dbReference>
<dbReference type="Gene3D" id="2.40.30.270">
    <property type="match status" value="1"/>
</dbReference>
<dbReference type="Gene3D" id="3.90.320.10">
    <property type="match status" value="1"/>
</dbReference>
<dbReference type="Gene3D" id="3.40.50.300">
    <property type="entry name" value="P-loop containing nucleotide triphosphate hydrolases"/>
    <property type="match status" value="2"/>
</dbReference>
<dbReference type="InterPro" id="IPR051827">
    <property type="entry name" value="Cas4_exonuclease"/>
</dbReference>
<dbReference type="InterPro" id="IPR041679">
    <property type="entry name" value="DNA2/NAM7-like_C"/>
</dbReference>
<dbReference type="InterPro" id="IPR041677">
    <property type="entry name" value="DNA2/NAM7_AAA_11"/>
</dbReference>
<dbReference type="InterPro" id="IPR048459">
    <property type="entry name" value="DNA2_Rift"/>
</dbReference>
<dbReference type="InterPro" id="IPR014808">
    <property type="entry name" value="DNA_replication_fac_Dna2_N"/>
</dbReference>
<dbReference type="InterPro" id="IPR027417">
    <property type="entry name" value="P-loop_NTPase"/>
</dbReference>
<dbReference type="InterPro" id="IPR011604">
    <property type="entry name" value="PDDEXK-like_dom_sf"/>
</dbReference>
<dbReference type="InterPro" id="IPR047187">
    <property type="entry name" value="SF1_C_Upf1"/>
</dbReference>
<dbReference type="PANTHER" id="PTHR36531">
    <property type="entry name" value="CRISPR-ASSOCIATED EXONUCLEASE CAS4"/>
    <property type="match status" value="1"/>
</dbReference>
<dbReference type="PANTHER" id="PTHR36531:SF6">
    <property type="entry name" value="DNA REPLICATION ATP-DEPENDENT HELICASE_NUCLEASE DNA2"/>
    <property type="match status" value="1"/>
</dbReference>
<dbReference type="Pfam" id="PF13086">
    <property type="entry name" value="AAA_11"/>
    <property type="match status" value="1"/>
</dbReference>
<dbReference type="Pfam" id="PF13087">
    <property type="entry name" value="AAA_12"/>
    <property type="match status" value="1"/>
</dbReference>
<dbReference type="Pfam" id="PF08696">
    <property type="entry name" value="Dna2"/>
    <property type="match status" value="1"/>
</dbReference>
<dbReference type="Pfam" id="PF21123">
    <property type="entry name" value="Dna2_Rift"/>
    <property type="match status" value="1"/>
</dbReference>
<dbReference type="SUPFAM" id="SSF52540">
    <property type="entry name" value="P-loop containing nucleoside triphosphate hydrolases"/>
    <property type="match status" value="1"/>
</dbReference>
<name>DNA2_XENTR</name>
<organism>
    <name type="scientific">Xenopus tropicalis</name>
    <name type="common">Western clawed frog</name>
    <name type="synonym">Silurana tropicalis</name>
    <dbReference type="NCBI Taxonomy" id="8364"/>
    <lineage>
        <taxon>Eukaryota</taxon>
        <taxon>Metazoa</taxon>
        <taxon>Chordata</taxon>
        <taxon>Craniata</taxon>
        <taxon>Vertebrata</taxon>
        <taxon>Euteleostomi</taxon>
        <taxon>Amphibia</taxon>
        <taxon>Batrachia</taxon>
        <taxon>Anura</taxon>
        <taxon>Pipoidea</taxon>
        <taxon>Pipidae</taxon>
        <taxon>Xenopodinae</taxon>
        <taxon>Xenopus</taxon>
        <taxon>Silurana</taxon>
    </lineage>
</organism>
<keyword id="KW-0004">4Fe-4S</keyword>
<keyword id="KW-0067">ATP-binding</keyword>
<keyword id="KW-0227">DNA damage</keyword>
<keyword id="KW-0234">DNA repair</keyword>
<keyword id="KW-0235">DNA replication</keyword>
<keyword id="KW-0238">DNA-binding</keyword>
<keyword id="KW-0255">Endonuclease</keyword>
<keyword id="KW-0347">Helicase</keyword>
<keyword id="KW-0378">Hydrolase</keyword>
<keyword id="KW-0408">Iron</keyword>
<keyword id="KW-0411">Iron-sulfur</keyword>
<keyword id="KW-0479">Metal-binding</keyword>
<keyword id="KW-0496">Mitochondrion</keyword>
<keyword id="KW-0511">Multifunctional enzyme</keyword>
<keyword id="KW-0540">Nuclease</keyword>
<keyword id="KW-0547">Nucleotide-binding</keyword>
<keyword id="KW-0539">Nucleus</keyword>
<keyword id="KW-1185">Reference proteome</keyword>
<reference key="1">
    <citation type="journal article" date="2010" name="Science">
        <title>The genome of the Western clawed frog Xenopus tropicalis.</title>
        <authorList>
            <person name="Hellsten U."/>
            <person name="Harland R.M."/>
            <person name="Gilchrist M.J."/>
            <person name="Hendrix D."/>
            <person name="Jurka J."/>
            <person name="Kapitonov V."/>
            <person name="Ovcharenko I."/>
            <person name="Putnam N.H."/>
            <person name="Shu S."/>
            <person name="Taher L."/>
            <person name="Blitz I.L."/>
            <person name="Blumberg B."/>
            <person name="Dichmann D.S."/>
            <person name="Dubchak I."/>
            <person name="Amaya E."/>
            <person name="Detter J.C."/>
            <person name="Fletcher R."/>
            <person name="Gerhard D.S."/>
            <person name="Goodstein D."/>
            <person name="Graves T."/>
            <person name="Grigoriev I.V."/>
            <person name="Grimwood J."/>
            <person name="Kawashima T."/>
            <person name="Lindquist E."/>
            <person name="Lucas S.M."/>
            <person name="Mead P.E."/>
            <person name="Mitros T."/>
            <person name="Ogino H."/>
            <person name="Ohta Y."/>
            <person name="Poliakov A.V."/>
            <person name="Pollet N."/>
            <person name="Robert J."/>
            <person name="Salamov A."/>
            <person name="Sater A.K."/>
            <person name="Schmutz J."/>
            <person name="Terry A."/>
            <person name="Vize P.D."/>
            <person name="Warren W.C."/>
            <person name="Wells D."/>
            <person name="Wills A."/>
            <person name="Wilson R.K."/>
            <person name="Zimmerman L.B."/>
            <person name="Zorn A.M."/>
            <person name="Grainger R."/>
            <person name="Grammer T."/>
            <person name="Khokha M.K."/>
            <person name="Richardson P.M."/>
            <person name="Rokhsar D.S."/>
        </authorList>
    </citation>
    <scope>NUCLEOTIDE SEQUENCE [LARGE SCALE GENOMIC DNA]</scope>
</reference>
<gene>
    <name type="primary">dna2</name>
</gene>